<evidence type="ECO:0000255" key="1">
    <source>
        <dbReference type="HAMAP-Rule" id="MF_00640"/>
    </source>
</evidence>
<evidence type="ECO:0000256" key="2">
    <source>
        <dbReference type="SAM" id="MobiDB-lite"/>
    </source>
</evidence>
<accession>B8HNE7</accession>
<name>DHSL_CYAP4</name>
<feature type="chain" id="PRO_1000147421" description="Deoxyhypusine synthase-like protein">
    <location>
        <begin position="1"/>
        <end position="400"/>
    </location>
</feature>
<feature type="region of interest" description="Disordered" evidence="2">
    <location>
        <begin position="372"/>
        <end position="400"/>
    </location>
</feature>
<dbReference type="EC" id="2.5.-.-" evidence="1"/>
<dbReference type="EMBL" id="CP001344">
    <property type="protein sequence ID" value="ACL47274.1"/>
    <property type="molecule type" value="Genomic_DNA"/>
</dbReference>
<dbReference type="SMR" id="B8HNE7"/>
<dbReference type="STRING" id="395961.Cyan7425_4976"/>
<dbReference type="KEGG" id="cyn:Cyan7425_4976"/>
<dbReference type="eggNOG" id="COG1899">
    <property type="taxonomic scope" value="Bacteria"/>
</dbReference>
<dbReference type="HOGENOM" id="CLU_039781_1_0_3"/>
<dbReference type="OrthoDB" id="9771211at2"/>
<dbReference type="GO" id="GO:0005737">
    <property type="term" value="C:cytoplasm"/>
    <property type="evidence" value="ECO:0007669"/>
    <property type="project" value="TreeGrafter"/>
</dbReference>
<dbReference type="GO" id="GO:0034038">
    <property type="term" value="F:deoxyhypusine synthase activity"/>
    <property type="evidence" value="ECO:0007669"/>
    <property type="project" value="TreeGrafter"/>
</dbReference>
<dbReference type="Gene3D" id="3.40.910.10">
    <property type="entry name" value="Deoxyhypusine synthase"/>
    <property type="match status" value="1"/>
</dbReference>
<dbReference type="HAMAP" id="MF_00640">
    <property type="entry name" value="DHS_like"/>
    <property type="match status" value="1"/>
</dbReference>
<dbReference type="InterPro" id="IPR002773">
    <property type="entry name" value="Deoxyhypusine_synthase"/>
</dbReference>
<dbReference type="InterPro" id="IPR023496">
    <property type="entry name" value="Deoxyhypusine_synthase-like"/>
</dbReference>
<dbReference type="InterPro" id="IPR036982">
    <property type="entry name" value="Deoxyhypusine_synthase_sf"/>
</dbReference>
<dbReference type="InterPro" id="IPR029035">
    <property type="entry name" value="DHS-like_NAD/FAD-binding_dom"/>
</dbReference>
<dbReference type="NCBIfam" id="NF001980">
    <property type="entry name" value="PRK00770.1"/>
    <property type="match status" value="1"/>
</dbReference>
<dbReference type="PANTHER" id="PTHR11703">
    <property type="entry name" value="DEOXYHYPUSINE SYNTHASE"/>
    <property type="match status" value="1"/>
</dbReference>
<dbReference type="PANTHER" id="PTHR11703:SF2">
    <property type="entry name" value="DEOXYHYPUSINE SYNTHASE-LIKE PROTEIN"/>
    <property type="match status" value="1"/>
</dbReference>
<dbReference type="Pfam" id="PF01916">
    <property type="entry name" value="DS"/>
    <property type="match status" value="1"/>
</dbReference>
<dbReference type="SUPFAM" id="SSF52467">
    <property type="entry name" value="DHS-like NAD/FAD-binding domain"/>
    <property type="match status" value="1"/>
</dbReference>
<comment type="similarity">
    <text evidence="1">Belongs to the deoxyhypusine synthase family.</text>
</comment>
<sequence length="400" mass="43816">MSQLFSHKIAPSPIPDNISVVDLIDNYFTAYNSARLREICHLLAQKVMQPGVTVGLSLSGAMTPTGLGISALAPLVRAGLIDYIISTGANLYHDLHYALGMDLYASHPFVDDVKLRQESRIRIYDIIFDYDVLLETDAFIREVLRAEPFQRRMGTAEFHHLLGQYARAAEVELGRSHSSLLATAYECGVPIYTSSPGDSSIGMNVAALALEGSQLVLDPALDVNETAAIAYFARESDIPDQEGKSAALIIGGGSPKNFLLQTQPQIHEVLGLEERGHDYFIQITDARPDTGGLSGAVPSEAVSWGKVDPNGLRDTVVCYTDSTIALPILTAYVLNQCAPRPLKRLYDRRPAMIEELQRLYLQAQFKQQAEAKLGKEQMPEPQSTEPVATYPCGTPIKGRK</sequence>
<proteinExistence type="inferred from homology"/>
<organism>
    <name type="scientific">Cyanothece sp. (strain PCC 7425 / ATCC 29141)</name>
    <dbReference type="NCBI Taxonomy" id="395961"/>
    <lineage>
        <taxon>Bacteria</taxon>
        <taxon>Bacillati</taxon>
        <taxon>Cyanobacteriota</taxon>
        <taxon>Cyanophyceae</taxon>
        <taxon>Gomontiellales</taxon>
        <taxon>Cyanothecaceae</taxon>
        <taxon>Cyanothece</taxon>
    </lineage>
</organism>
<reference key="1">
    <citation type="journal article" date="2011" name="MBio">
        <title>Novel metabolic attributes of the genus Cyanothece, comprising a group of unicellular nitrogen-fixing Cyanobacteria.</title>
        <authorList>
            <person name="Bandyopadhyay A."/>
            <person name="Elvitigala T."/>
            <person name="Welsh E."/>
            <person name="Stockel J."/>
            <person name="Liberton M."/>
            <person name="Min H."/>
            <person name="Sherman L.A."/>
            <person name="Pakrasi H.B."/>
        </authorList>
    </citation>
    <scope>NUCLEOTIDE SEQUENCE [LARGE SCALE GENOMIC DNA]</scope>
    <source>
        <strain>PCC 7425 / ATCC 29141</strain>
    </source>
</reference>
<keyword id="KW-0808">Transferase</keyword>
<protein>
    <recommendedName>
        <fullName evidence="1">Deoxyhypusine synthase-like protein</fullName>
        <ecNumber evidence="1">2.5.-.-</ecNumber>
    </recommendedName>
</protein>
<gene>
    <name type="ordered locus">Cyan7425_4976</name>
</gene>